<accession>A8GZM3</accession>
<reference key="1">
    <citation type="submission" date="2007-10" db="EMBL/GenBank/DDBJ databases">
        <title>Complete sequence of Shewanella pealeana ATCC 700345.</title>
        <authorList>
            <consortium name="US DOE Joint Genome Institute"/>
            <person name="Copeland A."/>
            <person name="Lucas S."/>
            <person name="Lapidus A."/>
            <person name="Barry K."/>
            <person name="Glavina del Rio T."/>
            <person name="Dalin E."/>
            <person name="Tice H."/>
            <person name="Pitluck S."/>
            <person name="Chertkov O."/>
            <person name="Brettin T."/>
            <person name="Bruce D."/>
            <person name="Detter J.C."/>
            <person name="Han C."/>
            <person name="Schmutz J."/>
            <person name="Larimer F."/>
            <person name="Land M."/>
            <person name="Hauser L."/>
            <person name="Kyrpides N."/>
            <person name="Kim E."/>
            <person name="Zhao J.-S.Z."/>
            <person name="Manno D."/>
            <person name="Hawari J."/>
            <person name="Richardson P."/>
        </authorList>
    </citation>
    <scope>NUCLEOTIDE SEQUENCE [LARGE SCALE GENOMIC DNA]</scope>
    <source>
        <strain>ATCC 700345 / ANG-SQ1</strain>
    </source>
</reference>
<name>PUR9_SHEPA</name>
<organism>
    <name type="scientific">Shewanella pealeana (strain ATCC 700345 / ANG-SQ1)</name>
    <dbReference type="NCBI Taxonomy" id="398579"/>
    <lineage>
        <taxon>Bacteria</taxon>
        <taxon>Pseudomonadati</taxon>
        <taxon>Pseudomonadota</taxon>
        <taxon>Gammaproteobacteria</taxon>
        <taxon>Alteromonadales</taxon>
        <taxon>Shewanellaceae</taxon>
        <taxon>Shewanella</taxon>
    </lineage>
</organism>
<sequence length="529" mass="57106">MNNARPIRRALLSVSDKTGILEFAQALHAQGVELLSTGGTARLLADNGVPVIEVSDYTGHPEIMDGRVKTLHPKVHGGILARRGIDEIVMEQNNIKPIDLVAVNLYPFAATVAQEGCTLADAIENIDIGGPTMVRSTAKNHKDTTIIVNAKDYGRVIAEMQSNEASTTLETRFDLAIAAFEHTAAYDGMIANYFGTKVPAHSNDECHEDSKFPRTYNTQLVKKQDLRYGENSHQTAAFYVDTNLDEASVATAVQLQGKALSYNNIADTDSALECVKEFDEPACVIVKHANPCGVAIGENLLEAYNRAFQTDPTSAFGGIIAFNGELDAATASAIVERQFVEVIIAPKVSQAARDVIAAKANVRLLECGEWAAKTTSLDYKRVNGGLLLQDRDQGMVGLDDVKVVSKRQPTAEEMKDLMFCWKVAKFVKSNAIVYAKNSMTIGVGAGQMSRVYSAKVAGIKAADEGLEVQNSVMASDAFFPFRDGIDAAAEAGISCIIQPGGSIRDEEIIAAADEHGMAMVFTGMRHFRH</sequence>
<comment type="catalytic activity">
    <reaction evidence="1">
        <text>(6R)-10-formyltetrahydrofolate + 5-amino-1-(5-phospho-beta-D-ribosyl)imidazole-4-carboxamide = 5-formamido-1-(5-phospho-D-ribosyl)imidazole-4-carboxamide + (6S)-5,6,7,8-tetrahydrofolate</text>
        <dbReference type="Rhea" id="RHEA:22192"/>
        <dbReference type="ChEBI" id="CHEBI:57453"/>
        <dbReference type="ChEBI" id="CHEBI:58467"/>
        <dbReference type="ChEBI" id="CHEBI:58475"/>
        <dbReference type="ChEBI" id="CHEBI:195366"/>
        <dbReference type="EC" id="2.1.2.3"/>
    </reaction>
</comment>
<comment type="catalytic activity">
    <reaction evidence="1">
        <text>IMP + H2O = 5-formamido-1-(5-phospho-D-ribosyl)imidazole-4-carboxamide</text>
        <dbReference type="Rhea" id="RHEA:18445"/>
        <dbReference type="ChEBI" id="CHEBI:15377"/>
        <dbReference type="ChEBI" id="CHEBI:58053"/>
        <dbReference type="ChEBI" id="CHEBI:58467"/>
        <dbReference type="EC" id="3.5.4.10"/>
    </reaction>
</comment>
<comment type="pathway">
    <text evidence="1">Purine metabolism; IMP biosynthesis via de novo pathway; 5-formamido-1-(5-phospho-D-ribosyl)imidazole-4-carboxamide from 5-amino-1-(5-phospho-D-ribosyl)imidazole-4-carboxamide (10-formyl THF route): step 1/1.</text>
</comment>
<comment type="pathway">
    <text evidence="1">Purine metabolism; IMP biosynthesis via de novo pathway; IMP from 5-formamido-1-(5-phospho-D-ribosyl)imidazole-4-carboxamide: step 1/1.</text>
</comment>
<comment type="domain">
    <text evidence="1">The IMP cyclohydrolase activity resides in the N-terminal region.</text>
</comment>
<comment type="similarity">
    <text evidence="1">Belongs to the PurH family.</text>
</comment>
<keyword id="KW-0378">Hydrolase</keyword>
<keyword id="KW-0511">Multifunctional enzyme</keyword>
<keyword id="KW-0658">Purine biosynthesis</keyword>
<keyword id="KW-1185">Reference proteome</keyword>
<keyword id="KW-0808">Transferase</keyword>
<evidence type="ECO:0000255" key="1">
    <source>
        <dbReference type="HAMAP-Rule" id="MF_00139"/>
    </source>
</evidence>
<evidence type="ECO:0000255" key="2">
    <source>
        <dbReference type="PROSITE-ProRule" id="PRU01202"/>
    </source>
</evidence>
<dbReference type="EC" id="2.1.2.3" evidence="1"/>
<dbReference type="EC" id="3.5.4.10" evidence="1"/>
<dbReference type="EMBL" id="CP000851">
    <property type="protein sequence ID" value="ABV85760.1"/>
    <property type="molecule type" value="Genomic_DNA"/>
</dbReference>
<dbReference type="RefSeq" id="WP_012153698.1">
    <property type="nucleotide sequence ID" value="NC_009901.1"/>
</dbReference>
<dbReference type="SMR" id="A8GZM3"/>
<dbReference type="STRING" id="398579.Spea_0432"/>
<dbReference type="KEGG" id="spl:Spea_0432"/>
<dbReference type="eggNOG" id="COG0138">
    <property type="taxonomic scope" value="Bacteria"/>
</dbReference>
<dbReference type="HOGENOM" id="CLU_016316_5_2_6"/>
<dbReference type="OrthoDB" id="9802065at2"/>
<dbReference type="UniPathway" id="UPA00074">
    <property type="reaction ID" value="UER00133"/>
</dbReference>
<dbReference type="UniPathway" id="UPA00074">
    <property type="reaction ID" value="UER00135"/>
</dbReference>
<dbReference type="Proteomes" id="UP000002608">
    <property type="component" value="Chromosome"/>
</dbReference>
<dbReference type="GO" id="GO:0005829">
    <property type="term" value="C:cytosol"/>
    <property type="evidence" value="ECO:0007669"/>
    <property type="project" value="TreeGrafter"/>
</dbReference>
<dbReference type="GO" id="GO:0003937">
    <property type="term" value="F:IMP cyclohydrolase activity"/>
    <property type="evidence" value="ECO:0007669"/>
    <property type="project" value="UniProtKB-UniRule"/>
</dbReference>
<dbReference type="GO" id="GO:0004643">
    <property type="term" value="F:phosphoribosylaminoimidazolecarboxamide formyltransferase activity"/>
    <property type="evidence" value="ECO:0007669"/>
    <property type="project" value="UniProtKB-UniRule"/>
</dbReference>
<dbReference type="GO" id="GO:0006189">
    <property type="term" value="P:'de novo' IMP biosynthetic process"/>
    <property type="evidence" value="ECO:0007669"/>
    <property type="project" value="UniProtKB-UniRule"/>
</dbReference>
<dbReference type="CDD" id="cd01421">
    <property type="entry name" value="IMPCH"/>
    <property type="match status" value="1"/>
</dbReference>
<dbReference type="FunFam" id="3.40.140.20:FF:000001">
    <property type="entry name" value="Bifunctional purine biosynthesis protein PurH"/>
    <property type="match status" value="1"/>
</dbReference>
<dbReference type="FunFam" id="3.40.140.20:FF:000002">
    <property type="entry name" value="Bifunctional purine biosynthesis protein PurH"/>
    <property type="match status" value="1"/>
</dbReference>
<dbReference type="FunFam" id="3.40.50.1380:FF:000001">
    <property type="entry name" value="Bifunctional purine biosynthesis protein PurH"/>
    <property type="match status" value="1"/>
</dbReference>
<dbReference type="Gene3D" id="3.40.140.20">
    <property type="match status" value="2"/>
</dbReference>
<dbReference type="Gene3D" id="3.40.50.1380">
    <property type="entry name" value="Methylglyoxal synthase-like domain"/>
    <property type="match status" value="1"/>
</dbReference>
<dbReference type="HAMAP" id="MF_00139">
    <property type="entry name" value="PurH"/>
    <property type="match status" value="1"/>
</dbReference>
<dbReference type="InterPro" id="IPR024051">
    <property type="entry name" value="AICAR_Tfase_dup_dom_sf"/>
</dbReference>
<dbReference type="InterPro" id="IPR016193">
    <property type="entry name" value="Cytidine_deaminase-like"/>
</dbReference>
<dbReference type="InterPro" id="IPR011607">
    <property type="entry name" value="MGS-like_dom"/>
</dbReference>
<dbReference type="InterPro" id="IPR036914">
    <property type="entry name" value="MGS-like_dom_sf"/>
</dbReference>
<dbReference type="InterPro" id="IPR002695">
    <property type="entry name" value="PurH-like"/>
</dbReference>
<dbReference type="NCBIfam" id="NF002049">
    <property type="entry name" value="PRK00881.1"/>
    <property type="match status" value="1"/>
</dbReference>
<dbReference type="NCBIfam" id="TIGR00355">
    <property type="entry name" value="purH"/>
    <property type="match status" value="1"/>
</dbReference>
<dbReference type="PANTHER" id="PTHR11692:SF0">
    <property type="entry name" value="BIFUNCTIONAL PURINE BIOSYNTHESIS PROTEIN ATIC"/>
    <property type="match status" value="1"/>
</dbReference>
<dbReference type="PANTHER" id="PTHR11692">
    <property type="entry name" value="BIFUNCTIONAL PURINE BIOSYNTHESIS PROTEIN PURH"/>
    <property type="match status" value="1"/>
</dbReference>
<dbReference type="Pfam" id="PF01808">
    <property type="entry name" value="AICARFT_IMPCHas"/>
    <property type="match status" value="1"/>
</dbReference>
<dbReference type="Pfam" id="PF02142">
    <property type="entry name" value="MGS"/>
    <property type="match status" value="1"/>
</dbReference>
<dbReference type="PIRSF" id="PIRSF000414">
    <property type="entry name" value="AICARFT_IMPCHas"/>
    <property type="match status" value="1"/>
</dbReference>
<dbReference type="SMART" id="SM00798">
    <property type="entry name" value="AICARFT_IMPCHas"/>
    <property type="match status" value="1"/>
</dbReference>
<dbReference type="SMART" id="SM00851">
    <property type="entry name" value="MGS"/>
    <property type="match status" value="1"/>
</dbReference>
<dbReference type="SUPFAM" id="SSF53927">
    <property type="entry name" value="Cytidine deaminase-like"/>
    <property type="match status" value="1"/>
</dbReference>
<dbReference type="SUPFAM" id="SSF52335">
    <property type="entry name" value="Methylglyoxal synthase-like"/>
    <property type="match status" value="1"/>
</dbReference>
<dbReference type="PROSITE" id="PS51855">
    <property type="entry name" value="MGS"/>
    <property type="match status" value="1"/>
</dbReference>
<proteinExistence type="inferred from homology"/>
<protein>
    <recommendedName>
        <fullName evidence="1">Bifunctional purine biosynthesis protein PurH</fullName>
    </recommendedName>
    <domain>
        <recommendedName>
            <fullName evidence="1">Phosphoribosylaminoimidazolecarboxamide formyltransferase</fullName>
            <ecNumber evidence="1">2.1.2.3</ecNumber>
        </recommendedName>
        <alternativeName>
            <fullName evidence="1">AICAR transformylase</fullName>
        </alternativeName>
    </domain>
    <domain>
        <recommendedName>
            <fullName evidence="1">IMP cyclohydrolase</fullName>
            <ecNumber evidence="1">3.5.4.10</ecNumber>
        </recommendedName>
        <alternativeName>
            <fullName evidence="1">ATIC</fullName>
        </alternativeName>
        <alternativeName>
            <fullName evidence="1">IMP synthase</fullName>
        </alternativeName>
        <alternativeName>
            <fullName evidence="1">Inosinicase</fullName>
        </alternativeName>
    </domain>
</protein>
<feature type="chain" id="PRO_1000076494" description="Bifunctional purine biosynthesis protein PurH">
    <location>
        <begin position="1"/>
        <end position="529"/>
    </location>
</feature>
<feature type="domain" description="MGS-like" evidence="2">
    <location>
        <begin position="1"/>
        <end position="148"/>
    </location>
</feature>
<gene>
    <name evidence="1" type="primary">purH</name>
    <name type="ordered locus">Spea_0432</name>
</gene>